<reference key="1">
    <citation type="journal article" date="2000" name="DNA Res.">
        <title>Structural analysis of Arabidopsis thaliana chromosome 5. X. Sequence features of the regions of 3,076,755 bp covered by sixty P1 and TAC clones.</title>
        <authorList>
            <person name="Sato S."/>
            <person name="Nakamura Y."/>
            <person name="Kaneko T."/>
            <person name="Katoh T."/>
            <person name="Asamizu E."/>
            <person name="Kotani H."/>
            <person name="Tabata S."/>
        </authorList>
    </citation>
    <scope>NUCLEOTIDE SEQUENCE [LARGE SCALE GENOMIC DNA]</scope>
    <source>
        <strain>cv. Columbia</strain>
    </source>
</reference>
<reference key="2">
    <citation type="journal article" date="2017" name="Plant J.">
        <title>Araport11: a complete reannotation of the Arabidopsis thaliana reference genome.</title>
        <authorList>
            <person name="Cheng C.Y."/>
            <person name="Krishnakumar V."/>
            <person name="Chan A.P."/>
            <person name="Thibaud-Nissen F."/>
            <person name="Schobel S."/>
            <person name="Town C.D."/>
        </authorList>
    </citation>
    <scope>GENOME REANNOTATION</scope>
    <source>
        <strain>cv. Columbia</strain>
    </source>
</reference>
<reference key="3">
    <citation type="journal article" date="2003" name="Science">
        <title>Empirical analysis of transcriptional activity in the Arabidopsis genome.</title>
        <authorList>
            <person name="Yamada K."/>
            <person name="Lim J."/>
            <person name="Dale J.M."/>
            <person name="Chen H."/>
            <person name="Shinn P."/>
            <person name="Palm C.J."/>
            <person name="Southwick A.M."/>
            <person name="Wu H.C."/>
            <person name="Kim C.J."/>
            <person name="Nguyen M."/>
            <person name="Pham P.K."/>
            <person name="Cheuk R.F."/>
            <person name="Karlin-Newmann G."/>
            <person name="Liu S.X."/>
            <person name="Lam B."/>
            <person name="Sakano H."/>
            <person name="Wu T."/>
            <person name="Yu G."/>
            <person name="Miranda M."/>
            <person name="Quach H.L."/>
            <person name="Tripp M."/>
            <person name="Chang C.H."/>
            <person name="Lee J.M."/>
            <person name="Toriumi M.J."/>
            <person name="Chan M.M."/>
            <person name="Tang C.C."/>
            <person name="Onodera C.S."/>
            <person name="Deng J.M."/>
            <person name="Akiyama K."/>
            <person name="Ansari Y."/>
            <person name="Arakawa T."/>
            <person name="Banh J."/>
            <person name="Banno F."/>
            <person name="Bowser L."/>
            <person name="Brooks S.Y."/>
            <person name="Carninci P."/>
            <person name="Chao Q."/>
            <person name="Choy N."/>
            <person name="Enju A."/>
            <person name="Goldsmith A.D."/>
            <person name="Gurjal M."/>
            <person name="Hansen N.F."/>
            <person name="Hayashizaki Y."/>
            <person name="Johnson-Hopson C."/>
            <person name="Hsuan V.W."/>
            <person name="Iida K."/>
            <person name="Karnes M."/>
            <person name="Khan S."/>
            <person name="Koesema E."/>
            <person name="Ishida J."/>
            <person name="Jiang P.X."/>
            <person name="Jones T."/>
            <person name="Kawai J."/>
            <person name="Kamiya A."/>
            <person name="Meyers C."/>
            <person name="Nakajima M."/>
            <person name="Narusaka M."/>
            <person name="Seki M."/>
            <person name="Sakurai T."/>
            <person name="Satou M."/>
            <person name="Tamse R."/>
            <person name="Vaysberg M."/>
            <person name="Wallender E.K."/>
            <person name="Wong C."/>
            <person name="Yamamura Y."/>
            <person name="Yuan S."/>
            <person name="Shinozaki K."/>
            <person name="Davis R.W."/>
            <person name="Theologis A."/>
            <person name="Ecker J.R."/>
        </authorList>
    </citation>
    <scope>NUCLEOTIDE SEQUENCE [LARGE SCALE MRNA]</scope>
    <source>
        <strain>cv. Columbia</strain>
    </source>
</reference>
<reference key="4">
    <citation type="journal article" date="2001" name="Plant Physiol.">
        <title>Chloroplast and mitochondrial proteases in Arabidopsis. A proposed nomenclature.</title>
        <authorList>
            <person name="Adam Z."/>
            <person name="Adamska I."/>
            <person name="Nakabayashi K."/>
            <person name="Ostersetzer O."/>
            <person name="Haussuhl K."/>
            <person name="Manuell A."/>
            <person name="Zheng B."/>
            <person name="Vallon O."/>
            <person name="Rodermel S.R."/>
            <person name="Shinozaki K."/>
            <person name="Clarke A.K."/>
        </authorList>
    </citation>
    <scope>GENE FAMILY</scope>
    <scope>NOMENCLATURE</scope>
</reference>
<reference key="5">
    <citation type="journal article" date="2002" name="Genes Cells">
        <title>The VAR1 locus of Arabidopsis encodes a chloroplastic FtsH and is responsible for leaf variegation in the mutant alleles.</title>
        <authorList>
            <person name="Sakamoto W."/>
            <person name="Tamura T."/>
            <person name="Hanba-Tomita Y."/>
            <person name="Sodmergen X."/>
            <person name="Murata M."/>
        </authorList>
    </citation>
    <scope>FUNCTION</scope>
    <scope>SUBCELLULAR LOCATION</scope>
    <scope>INDUCTION BY LIGHT</scope>
    <scope>DISRUPTION PHENOTYPE</scope>
</reference>
<reference key="6">
    <citation type="journal article" date="2003" name="Plant Cell">
        <title>Coordinated regulation and complex formation of yellow variegated1 and yellow variegated2, chloroplastic FtsH metalloproteases involved in the repair cycle of photosystem II in Arabidopsis thylakoid membranes.</title>
        <authorList>
            <person name="Sakamoto W."/>
            <person name="Zaltsman A."/>
            <person name="Adam Z."/>
            <person name="Takahashi Y."/>
        </authorList>
    </citation>
    <scope>FUNCTION</scope>
    <scope>INTERACTION WITH FTSH2</scope>
    <scope>SUBCELLULAR LOCATION</scope>
</reference>
<reference key="7">
    <citation type="journal article" date="2004" name="Plant J.">
        <title>The Arabidopsis FtsH metalloprotease gene family: interchangeability of subunits in chloroplast oligomeric complexes.</title>
        <authorList>
            <person name="Yu F."/>
            <person name="Park S."/>
            <person name="Rodermel S.R."/>
        </authorList>
    </citation>
    <scope>SUBUNIT</scope>
    <scope>GENE FAMILY</scope>
    <scope>NOMENCLATURE</scope>
</reference>
<reference key="8">
    <citation type="journal article" date="2004" name="Plant Physiol.">
        <title>Expression in multigene families. Analysis of chloroplast and mitochondrial proteases.</title>
        <authorList>
            <person name="Sinvany-Villalobo G."/>
            <person name="Davydov O."/>
            <person name="Ben-Ari G."/>
            <person name="Zaltsman A."/>
            <person name="Raskind A."/>
            <person name="Adam Z."/>
        </authorList>
    </citation>
    <scope>INDUCTION BY HIGH LIGHT</scope>
</reference>
<reference key="9">
    <citation type="journal article" date="2005" name="Plant Physiol.">
        <title>Functional redundancy of AtFtsH metalloproteases in thylakoid membrane complexes.</title>
        <authorList>
            <person name="Yu F."/>
            <person name="Park S."/>
            <person name="Rodermel S.R."/>
        </authorList>
    </citation>
    <scope>SUBUNIT</scope>
    <scope>TISSUE SPECIFICITY</scope>
</reference>
<reference key="10">
    <citation type="journal article" date="2005" name="Plant J.">
        <title>Developmental and light effects on the accumulation of FtsH protease in Arabidopsis chloroplasts -- implications for thylakoid formation and photosystem II maintenance.</title>
        <authorList>
            <person name="Zaltsman A."/>
            <person name="Feder A."/>
            <person name="Adam Z."/>
        </authorList>
    </citation>
    <scope>DEVELOPMENTAL STAGE</scope>
</reference>
<reference key="11">
    <citation type="journal article" date="2005" name="Plant Cell">
        <title>Two types of FtsH protease subunits are required for chloroplast biogenesis and Photosystem II repair in Arabidopsis.</title>
        <authorList>
            <person name="Zaltsman A."/>
            <person name="Ori N."/>
            <person name="Adam Z."/>
        </authorList>
    </citation>
    <scope>SUBUNIT</scope>
</reference>
<reference key="12">
    <citation type="journal article" date="2005" name="Proc. Natl. Acad. Sci. U.S.A.">
        <title>AtFtsH6 is involved in the degradation of the light-harvesting complex II during high-light acclimation and senescence.</title>
        <authorList>
            <person name="Zelisko A."/>
            <person name="Garcia-Lorenzo M."/>
            <person name="Jackowski G."/>
            <person name="Jansson S."/>
            <person name="Funk C."/>
        </authorList>
    </citation>
    <scope>FUNCTION</scope>
</reference>
<reference key="13">
    <citation type="journal article" date="2006" name="Plant J.">
        <title>FtsH11 protease plays a critical role in Arabidopsis thermotolerance.</title>
        <authorList>
            <person name="Chen J."/>
            <person name="Burke J.J."/>
            <person name="Velten J."/>
            <person name="Xin Z."/>
        </authorList>
    </citation>
    <scope>FUNCTION</scope>
</reference>
<reference key="14">
    <citation type="journal article" date="2008" name="PLoS ONE">
        <title>Sorting signals, N-terminal modifications and abundance of the chloroplast proteome.</title>
        <authorList>
            <person name="Zybailov B."/>
            <person name="Rutschow H."/>
            <person name="Friso G."/>
            <person name="Rudella A."/>
            <person name="Emanuelsson O."/>
            <person name="Sun Q."/>
            <person name="van Wijk K.J."/>
        </authorList>
    </citation>
    <scope>IDENTIFICATION BY MASS SPECTROMETRY</scope>
    <scope>SUBCELLULAR LOCATION [LARGE SCALE ANALYSIS]</scope>
</reference>
<reference key="15">
    <citation type="journal article" date="2009" name="Plant Physiol.">
        <title>Large-scale Arabidopsis phosphoproteome profiling reveals novel chloroplast kinase substrates and phosphorylation networks.</title>
        <authorList>
            <person name="Reiland S."/>
            <person name="Messerli G."/>
            <person name="Baerenfaller K."/>
            <person name="Gerrits B."/>
            <person name="Endler A."/>
            <person name="Grossmann J."/>
            <person name="Gruissem W."/>
            <person name="Baginsky S."/>
        </authorList>
    </citation>
    <scope>IDENTIFICATION BY MASS SPECTROMETRY [LARGE SCALE ANALYSIS]</scope>
</reference>
<gene>
    <name type="primary">FTSH5</name>
    <name type="synonym">FTSH2</name>
    <name type="synonym">VAR1</name>
    <name type="ordered locus">At5g42270</name>
    <name type="ORF">K5J14.7</name>
</gene>
<organism>
    <name type="scientific">Arabidopsis thaliana</name>
    <name type="common">Mouse-ear cress</name>
    <dbReference type="NCBI Taxonomy" id="3702"/>
    <lineage>
        <taxon>Eukaryota</taxon>
        <taxon>Viridiplantae</taxon>
        <taxon>Streptophyta</taxon>
        <taxon>Embryophyta</taxon>
        <taxon>Tracheophyta</taxon>
        <taxon>Spermatophyta</taxon>
        <taxon>Magnoliopsida</taxon>
        <taxon>eudicotyledons</taxon>
        <taxon>Gunneridae</taxon>
        <taxon>Pentapetalae</taxon>
        <taxon>rosids</taxon>
        <taxon>malvids</taxon>
        <taxon>Brassicales</taxon>
        <taxon>Brassicaceae</taxon>
        <taxon>Camelineae</taxon>
        <taxon>Arabidopsis</taxon>
    </lineage>
</organism>
<name>FTSH5_ARATH</name>
<protein>
    <recommendedName>
        <fullName>ATP-dependent zinc metalloprotease FTSH 5, chloroplastic</fullName>
        <shortName>AtFTSH5</shortName>
        <ecNumber>3.4.24.-</ecNumber>
    </recommendedName>
    <alternativeName>
        <fullName>Protein VARIEGATED 1</fullName>
    </alternativeName>
</protein>
<proteinExistence type="evidence at protein level"/>
<keyword id="KW-0067">ATP-binding</keyword>
<keyword id="KW-0150">Chloroplast</keyword>
<keyword id="KW-0217">Developmental protein</keyword>
<keyword id="KW-0378">Hydrolase</keyword>
<keyword id="KW-0472">Membrane</keyword>
<keyword id="KW-0479">Metal-binding</keyword>
<keyword id="KW-0482">Metalloprotease</keyword>
<keyword id="KW-0547">Nucleotide-binding</keyword>
<keyword id="KW-0934">Plastid</keyword>
<keyword id="KW-0645">Protease</keyword>
<keyword id="KW-1185">Reference proteome</keyword>
<keyword id="KW-0793">Thylakoid</keyword>
<keyword id="KW-0809">Transit peptide</keyword>
<keyword id="KW-0812">Transmembrane</keyword>
<keyword id="KW-1133">Transmembrane helix</keyword>
<keyword id="KW-0862">Zinc</keyword>
<sequence>MATTSSNPLLLSSNFLGSQIIISAPTPKTTTKSLPFSVISRKRYQISQSEKLMKSLPSQAALAALLFSSSSPQALAVNEPVQPPAPTITAEAQSPNLSTFGQNVLMTAPNPQAQSSDLPDGTQWRYSEFLNAVKKGKVERVKFSKDGSVLQLTAVDNRRATVIVPNDPDLIDILAMNGVDISVSEGEGGNGLFDFIGNLLFPLLAFGGLFYLFRGGQGGAGGPGGLGGPMDFGRSKSKFQEVPETGVTFGDVAGADQAKLELQEVVDFLKNPDKYTALGAKIPKGCLLVGPPGTGKTLLARAVAGEAGVPFFSCAASEFVELFVGVGASRVRDLFEKAKSKAPCIVFIDEIDAVGRQRGAGMGGGNDEREQTINQLLTEMDGFSGNSGVIVLAATNRPDVLDSALLRPGRFDRQVTVDRPDVAGRVQILKVHSRGKAIGKDVDYEKVARRTPGFTGADLQNLMNEAAILAARRELKEISKDEISDALERIIAGPEKKNAVVSEEKKRLVAYHEAGHALVGALMPEYDPVAKISIIPRGQAGGLTFFAPSEERLESGLYSRSYLENQMAVALGGRVAEEVIFGDENVTTGASNDFMQVSRVARQMVERFGFSKKIGQVAVGGAGGNPFLGQSMSSQKDYSMATADVVDAEVRELVEKAYVRAKEIITTQIDILHKLAQLLIEKETVDGEEFMSLFIDGQAELYVS</sequence>
<accession>Q9FH02</accession>
<evidence type="ECO:0000250" key="1"/>
<evidence type="ECO:0000255" key="2"/>
<evidence type="ECO:0000269" key="3">
    <source>
    </source>
</evidence>
<evidence type="ECO:0000269" key="4">
    <source>
    </source>
</evidence>
<evidence type="ECO:0000269" key="5">
    <source>
    </source>
</evidence>
<evidence type="ECO:0000269" key="6">
    <source>
    </source>
</evidence>
<evidence type="ECO:0000269" key="7">
    <source>
    </source>
</evidence>
<evidence type="ECO:0000269" key="8">
    <source>
    </source>
</evidence>
<evidence type="ECO:0000269" key="9">
    <source>
    </source>
</evidence>
<evidence type="ECO:0000269" key="10">
    <source>
    </source>
</evidence>
<evidence type="ECO:0000269" key="11">
    <source>
    </source>
</evidence>
<evidence type="ECO:0000269" key="12">
    <source>
    </source>
</evidence>
<evidence type="ECO:0000305" key="13"/>
<comment type="function">
    <text evidence="3 4 10 11">Part of a complex that function as an ATP-dependent zinc metallopeptidase. Involved in the thylakoid formation and in the removal of damaged D1 in the photosystem II, preventing cell death under high-intensity light conditions. Not involved in the degradation of the light-harvesting complex of photosystem II (LHC II) or in thermotolerance.</text>
</comment>
<comment type="cofactor">
    <cofactor evidence="13">
        <name>Zn(2+)</name>
        <dbReference type="ChEBI" id="CHEBI:29105"/>
    </cofactor>
    <text evidence="13">Binds 1 zinc ion per subunit.</text>
</comment>
<comment type="subunit">
    <text evidence="5 8 9">Heterohexamers with FTSH1, FTSH2 and FTSH8.</text>
</comment>
<comment type="subcellular location">
    <subcellularLocation>
        <location evidence="3 4 12">Plastid</location>
        <location evidence="3 4 12">Chloroplast thylakoid membrane</location>
        <topology evidence="3 4">Single-pass membrane protein</topology>
        <orientation evidence="3 4">Stromal side</orientation>
    </subcellularLocation>
</comment>
<comment type="tissue specificity">
    <text evidence="8">Ubiquitous.</text>
</comment>
<comment type="developmental stage">
    <text evidence="7">Low expression in cotyledons, increasing with leaves development.</text>
</comment>
<comment type="induction">
    <text evidence="3 6">By high light.</text>
</comment>
<comment type="disruption phenotype">
    <text evidence="3">Leaf-variegated. Mutations can be complemented by overexpression of FTSH1. The presence of both FTSH1 or FTSH5 (subunit type A) and FTSH2 or FTSH8 (subunit type B) is essential for an active complex formation.</text>
</comment>
<comment type="similarity">
    <text evidence="13">In the N-terminal section; belongs to the AAA ATPase family.</text>
</comment>
<comment type="similarity">
    <text evidence="13">In the C-terminal section; belongs to the peptidase M41 family.</text>
</comment>
<dbReference type="EC" id="3.4.24.-"/>
<dbReference type="EMBL" id="AB023032">
    <property type="protein sequence ID" value="BAB10200.1"/>
    <property type="molecule type" value="Genomic_DNA"/>
</dbReference>
<dbReference type="EMBL" id="CP002688">
    <property type="protein sequence ID" value="AED94790.1"/>
    <property type="molecule type" value="Genomic_DNA"/>
</dbReference>
<dbReference type="EMBL" id="AY126987">
    <property type="protein sequence ID" value="AAM83215.1"/>
    <property type="molecule type" value="mRNA"/>
</dbReference>
<dbReference type="RefSeq" id="NP_568604.1">
    <property type="nucleotide sequence ID" value="NM_123592.4"/>
</dbReference>
<dbReference type="SMR" id="Q9FH02"/>
<dbReference type="BioGRID" id="19482">
    <property type="interactions" value="3"/>
</dbReference>
<dbReference type="FunCoup" id="Q9FH02">
    <property type="interactions" value="1061"/>
</dbReference>
<dbReference type="STRING" id="3702.Q9FH02"/>
<dbReference type="MEROPS" id="M41.024"/>
<dbReference type="iPTMnet" id="Q9FH02"/>
<dbReference type="PaxDb" id="3702-AT5G42270.1"/>
<dbReference type="ProteomicsDB" id="228918"/>
<dbReference type="EnsemblPlants" id="AT5G42270.1">
    <property type="protein sequence ID" value="AT5G42270.1"/>
    <property type="gene ID" value="AT5G42270"/>
</dbReference>
<dbReference type="GeneID" id="834232"/>
<dbReference type="Gramene" id="AT5G42270.1">
    <property type="protein sequence ID" value="AT5G42270.1"/>
    <property type="gene ID" value="AT5G42270"/>
</dbReference>
<dbReference type="KEGG" id="ath:AT5G42270"/>
<dbReference type="Araport" id="AT5G42270"/>
<dbReference type="TAIR" id="AT5G42270">
    <property type="gene designation" value="VAR1"/>
</dbReference>
<dbReference type="eggNOG" id="KOG0731">
    <property type="taxonomic scope" value="Eukaryota"/>
</dbReference>
<dbReference type="HOGENOM" id="CLU_000688_16_2_1"/>
<dbReference type="InParanoid" id="Q9FH02"/>
<dbReference type="OMA" id="FGQNVLM"/>
<dbReference type="PhylomeDB" id="Q9FH02"/>
<dbReference type="BRENDA" id="3.4.24.B20">
    <property type="organism ID" value="399"/>
</dbReference>
<dbReference type="PRO" id="PR:Q9FH02"/>
<dbReference type="Proteomes" id="UP000006548">
    <property type="component" value="Chromosome 5"/>
</dbReference>
<dbReference type="ExpressionAtlas" id="Q9FH02">
    <property type="expression patterns" value="baseline and differential"/>
</dbReference>
<dbReference type="GO" id="GO:0009507">
    <property type="term" value="C:chloroplast"/>
    <property type="evidence" value="ECO:0000314"/>
    <property type="project" value="TAIR"/>
</dbReference>
<dbReference type="GO" id="GO:0009941">
    <property type="term" value="C:chloroplast envelope"/>
    <property type="evidence" value="ECO:0007005"/>
    <property type="project" value="TAIR"/>
</dbReference>
<dbReference type="GO" id="GO:0009534">
    <property type="term" value="C:chloroplast thylakoid"/>
    <property type="evidence" value="ECO:0007005"/>
    <property type="project" value="TAIR"/>
</dbReference>
<dbReference type="GO" id="GO:0009535">
    <property type="term" value="C:chloroplast thylakoid membrane"/>
    <property type="evidence" value="ECO:0000314"/>
    <property type="project" value="TAIR"/>
</dbReference>
<dbReference type="GO" id="GO:0009536">
    <property type="term" value="C:plastid"/>
    <property type="evidence" value="ECO:0007005"/>
    <property type="project" value="TAIR"/>
</dbReference>
<dbReference type="GO" id="GO:0009579">
    <property type="term" value="C:thylakoid"/>
    <property type="evidence" value="ECO:0007005"/>
    <property type="project" value="TAIR"/>
</dbReference>
<dbReference type="GO" id="GO:0005524">
    <property type="term" value="F:ATP binding"/>
    <property type="evidence" value="ECO:0007669"/>
    <property type="project" value="UniProtKB-KW"/>
</dbReference>
<dbReference type="GO" id="GO:0016887">
    <property type="term" value="F:ATP hydrolysis activity"/>
    <property type="evidence" value="ECO:0000314"/>
    <property type="project" value="TAIR"/>
</dbReference>
<dbReference type="GO" id="GO:0004176">
    <property type="term" value="F:ATP-dependent peptidase activity"/>
    <property type="evidence" value="ECO:0007669"/>
    <property type="project" value="InterPro"/>
</dbReference>
<dbReference type="GO" id="GO:0046872">
    <property type="term" value="F:metal ion binding"/>
    <property type="evidence" value="ECO:0007669"/>
    <property type="project" value="UniProtKB-KW"/>
</dbReference>
<dbReference type="GO" id="GO:0004222">
    <property type="term" value="F:metalloendopeptidase activity"/>
    <property type="evidence" value="ECO:0007669"/>
    <property type="project" value="InterPro"/>
</dbReference>
<dbReference type="GO" id="GO:0003729">
    <property type="term" value="F:mRNA binding"/>
    <property type="evidence" value="ECO:0000314"/>
    <property type="project" value="TAIR"/>
</dbReference>
<dbReference type="GO" id="GO:0010205">
    <property type="term" value="P:photoinhibition"/>
    <property type="evidence" value="ECO:0000315"/>
    <property type="project" value="TAIR"/>
</dbReference>
<dbReference type="GO" id="GO:0048564">
    <property type="term" value="P:photosystem I assembly"/>
    <property type="evidence" value="ECO:0000315"/>
    <property type="project" value="TAIR"/>
</dbReference>
<dbReference type="GO" id="GO:0030163">
    <property type="term" value="P:protein catabolic process"/>
    <property type="evidence" value="ECO:0000314"/>
    <property type="project" value="TAIR"/>
</dbReference>
<dbReference type="GO" id="GO:0006508">
    <property type="term" value="P:proteolysis"/>
    <property type="evidence" value="ECO:0007669"/>
    <property type="project" value="UniProtKB-KW"/>
</dbReference>
<dbReference type="GO" id="GO:0010304">
    <property type="term" value="P:PSII associated light-harvesting complex II catabolic process"/>
    <property type="evidence" value="ECO:0000304"/>
    <property type="project" value="TAIR"/>
</dbReference>
<dbReference type="CDD" id="cd19501">
    <property type="entry name" value="RecA-like_FtsH"/>
    <property type="match status" value="1"/>
</dbReference>
<dbReference type="FunFam" id="1.10.8.60:FF:000001">
    <property type="entry name" value="ATP-dependent zinc metalloprotease FtsH"/>
    <property type="match status" value="1"/>
</dbReference>
<dbReference type="FunFam" id="1.20.58.760:FF:000001">
    <property type="entry name" value="ATP-dependent zinc metalloprotease FtsH"/>
    <property type="match status" value="1"/>
</dbReference>
<dbReference type="FunFam" id="3.40.50.300:FF:000001">
    <property type="entry name" value="ATP-dependent zinc metalloprotease FtsH"/>
    <property type="match status" value="1"/>
</dbReference>
<dbReference type="FunFam" id="3.30.720.210:FF:000003">
    <property type="entry name" value="ATP-dependent zinc metalloprotease FTSH, chloroplastic"/>
    <property type="match status" value="1"/>
</dbReference>
<dbReference type="Gene3D" id="1.10.8.60">
    <property type="match status" value="1"/>
</dbReference>
<dbReference type="Gene3D" id="3.30.720.210">
    <property type="match status" value="1"/>
</dbReference>
<dbReference type="Gene3D" id="3.40.50.300">
    <property type="entry name" value="P-loop containing nucleotide triphosphate hydrolases"/>
    <property type="match status" value="1"/>
</dbReference>
<dbReference type="Gene3D" id="1.20.58.760">
    <property type="entry name" value="Peptidase M41"/>
    <property type="match status" value="1"/>
</dbReference>
<dbReference type="HAMAP" id="MF_01458">
    <property type="entry name" value="FtsH"/>
    <property type="match status" value="1"/>
</dbReference>
<dbReference type="InterPro" id="IPR003593">
    <property type="entry name" value="AAA+_ATPase"/>
</dbReference>
<dbReference type="InterPro" id="IPR041569">
    <property type="entry name" value="AAA_lid_3"/>
</dbReference>
<dbReference type="InterPro" id="IPR003959">
    <property type="entry name" value="ATPase_AAA_core"/>
</dbReference>
<dbReference type="InterPro" id="IPR003960">
    <property type="entry name" value="ATPase_AAA_CS"/>
</dbReference>
<dbReference type="InterPro" id="IPR005936">
    <property type="entry name" value="FtsH"/>
</dbReference>
<dbReference type="InterPro" id="IPR027417">
    <property type="entry name" value="P-loop_NTPase"/>
</dbReference>
<dbReference type="InterPro" id="IPR000642">
    <property type="entry name" value="Peptidase_M41"/>
</dbReference>
<dbReference type="InterPro" id="IPR037219">
    <property type="entry name" value="Peptidase_M41-like"/>
</dbReference>
<dbReference type="NCBIfam" id="TIGR01241">
    <property type="entry name" value="FtsH_fam"/>
    <property type="match status" value="1"/>
</dbReference>
<dbReference type="PANTHER" id="PTHR23076:SF113">
    <property type="entry name" value="ATP-DEPENDENT ZINC METALLOPROTEASE FTSH 1, CHLOROPLASTIC-RELATED"/>
    <property type="match status" value="1"/>
</dbReference>
<dbReference type="PANTHER" id="PTHR23076">
    <property type="entry name" value="METALLOPROTEASE M41 FTSH"/>
    <property type="match status" value="1"/>
</dbReference>
<dbReference type="Pfam" id="PF00004">
    <property type="entry name" value="AAA"/>
    <property type="match status" value="1"/>
</dbReference>
<dbReference type="Pfam" id="PF17862">
    <property type="entry name" value="AAA_lid_3"/>
    <property type="match status" value="1"/>
</dbReference>
<dbReference type="Pfam" id="PF01434">
    <property type="entry name" value="Peptidase_M41"/>
    <property type="match status" value="1"/>
</dbReference>
<dbReference type="SMART" id="SM00382">
    <property type="entry name" value="AAA"/>
    <property type="match status" value="1"/>
</dbReference>
<dbReference type="SUPFAM" id="SSF140990">
    <property type="entry name" value="FtsH protease domain-like"/>
    <property type="match status" value="1"/>
</dbReference>
<dbReference type="SUPFAM" id="SSF52540">
    <property type="entry name" value="P-loop containing nucleoside triphosphate hydrolases"/>
    <property type="match status" value="1"/>
</dbReference>
<dbReference type="PROSITE" id="PS00674">
    <property type="entry name" value="AAA"/>
    <property type="match status" value="1"/>
</dbReference>
<feature type="transit peptide" description="Chloroplast" evidence="2">
    <location>
        <begin position="1"/>
        <end position="58"/>
    </location>
</feature>
<feature type="transit peptide" description="Thylakoid" evidence="13">
    <location>
        <begin position="59"/>
        <end position="76"/>
    </location>
</feature>
<feature type="chain" id="PRO_0000000244" description="ATP-dependent zinc metalloprotease FTSH 5, chloroplastic">
    <location>
        <begin position="77"/>
        <end position="704"/>
    </location>
</feature>
<feature type="transmembrane region" description="Helical" evidence="2">
    <location>
        <begin position="193"/>
        <end position="213"/>
    </location>
</feature>
<feature type="active site" evidence="1">
    <location>
        <position position="513"/>
    </location>
</feature>
<feature type="binding site" evidence="2">
    <location>
        <begin position="290"/>
        <end position="297"/>
    </location>
    <ligand>
        <name>ATP</name>
        <dbReference type="ChEBI" id="CHEBI:30616"/>
    </ligand>
</feature>
<feature type="binding site" evidence="1">
    <location>
        <position position="512"/>
    </location>
    <ligand>
        <name>Zn(2+)</name>
        <dbReference type="ChEBI" id="CHEBI:29105"/>
        <note>catalytic</note>
    </ligand>
</feature>
<feature type="binding site" evidence="1">
    <location>
        <position position="516"/>
    </location>
    <ligand>
        <name>Zn(2+)</name>
        <dbReference type="ChEBI" id="CHEBI:29105"/>
        <note>catalytic</note>
    </ligand>
</feature>
<feature type="binding site" evidence="1">
    <location>
        <position position="593"/>
    </location>
    <ligand>
        <name>Zn(2+)</name>
        <dbReference type="ChEBI" id="CHEBI:29105"/>
        <note>catalytic</note>
    </ligand>
</feature>